<comment type="function">
    <text evidence="1">Catalyzes the isomerization between 2-isopropylmalate and 3-isopropylmalate, via the formation of 2-isopropylmaleate.</text>
</comment>
<comment type="catalytic activity">
    <reaction evidence="1">
        <text>(2R,3S)-3-isopropylmalate = (2S)-2-isopropylmalate</text>
        <dbReference type="Rhea" id="RHEA:32287"/>
        <dbReference type="ChEBI" id="CHEBI:1178"/>
        <dbReference type="ChEBI" id="CHEBI:35121"/>
        <dbReference type="EC" id="4.2.1.33"/>
    </reaction>
</comment>
<comment type="cofactor">
    <cofactor evidence="1">
        <name>[4Fe-4S] cluster</name>
        <dbReference type="ChEBI" id="CHEBI:49883"/>
    </cofactor>
    <text evidence="1">Binds 1 [4Fe-4S] cluster per subunit.</text>
</comment>
<comment type="pathway">
    <text evidence="1">Amino-acid biosynthesis; L-leucine biosynthesis; L-leucine from 3-methyl-2-oxobutanoate: step 2/4.</text>
</comment>
<comment type="subunit">
    <text evidence="1">Heterodimer of LeuC and LeuD.</text>
</comment>
<comment type="similarity">
    <text evidence="1">Belongs to the aconitase/IPM isomerase family. LeuC type 1 subfamily.</text>
</comment>
<evidence type="ECO:0000255" key="1">
    <source>
        <dbReference type="HAMAP-Rule" id="MF_01026"/>
    </source>
</evidence>
<accession>Q9JU82</accession>
<accession>A1IS55</accession>
<organism>
    <name type="scientific">Neisseria meningitidis serogroup A / serotype 4A (strain DSM 15465 / Z2491)</name>
    <dbReference type="NCBI Taxonomy" id="122587"/>
    <lineage>
        <taxon>Bacteria</taxon>
        <taxon>Pseudomonadati</taxon>
        <taxon>Pseudomonadota</taxon>
        <taxon>Betaproteobacteria</taxon>
        <taxon>Neisseriales</taxon>
        <taxon>Neisseriaceae</taxon>
        <taxon>Neisseria</taxon>
    </lineage>
</organism>
<keyword id="KW-0004">4Fe-4S</keyword>
<keyword id="KW-0028">Amino-acid biosynthesis</keyword>
<keyword id="KW-0100">Branched-chain amino acid biosynthesis</keyword>
<keyword id="KW-0408">Iron</keyword>
<keyword id="KW-0411">Iron-sulfur</keyword>
<keyword id="KW-0432">Leucine biosynthesis</keyword>
<keyword id="KW-0456">Lyase</keyword>
<keyword id="KW-0479">Metal-binding</keyword>
<reference key="1">
    <citation type="journal article" date="2000" name="Nature">
        <title>Complete DNA sequence of a serogroup A strain of Neisseria meningitidis Z2491.</title>
        <authorList>
            <person name="Parkhill J."/>
            <person name="Achtman M."/>
            <person name="James K.D."/>
            <person name="Bentley S.D."/>
            <person name="Churcher C.M."/>
            <person name="Klee S.R."/>
            <person name="Morelli G."/>
            <person name="Basham D."/>
            <person name="Brown D."/>
            <person name="Chillingworth T."/>
            <person name="Davies R.M."/>
            <person name="Davis P."/>
            <person name="Devlin K."/>
            <person name="Feltwell T."/>
            <person name="Hamlin N."/>
            <person name="Holroyd S."/>
            <person name="Jagels K."/>
            <person name="Leather S."/>
            <person name="Moule S."/>
            <person name="Mungall K.L."/>
            <person name="Quail M.A."/>
            <person name="Rajandream M.A."/>
            <person name="Rutherford K.M."/>
            <person name="Simmonds M."/>
            <person name="Skelton J."/>
            <person name="Whitehead S."/>
            <person name="Spratt B.G."/>
            <person name="Barrell B.G."/>
        </authorList>
    </citation>
    <scope>NUCLEOTIDE SEQUENCE [LARGE SCALE GENOMIC DNA]</scope>
    <source>
        <strain>DSM 15465 / Z2491</strain>
    </source>
</reference>
<protein>
    <recommendedName>
        <fullName evidence="1">3-isopropylmalate dehydratase large subunit</fullName>
        <ecNumber evidence="1">4.2.1.33</ecNumber>
    </recommendedName>
    <alternativeName>
        <fullName evidence="1">Alpha-IPM isomerase</fullName>
        <shortName evidence="1">IPMI</shortName>
    </alternativeName>
    <alternativeName>
        <fullName evidence="1">Isopropylmalate isomerase</fullName>
    </alternativeName>
</protein>
<sequence>MTAQTLYDKLWNSHVVREEEDGTVLLYIDRHLVHEVTSPQAFEGLKMAGRKLWRIDSVVSTADHNTPTGDWDKGIQDPISKLQVDTLDKNIKEFGALAYFPFMDKGQGIVHVMGPEQGATLPGMTVVCGDSHTSTHGAFGALAHGIGTSEVEHTMATQCITAKKSKSMLIAVDGKLKAGVTAKDVALYIIGQIGTAGGTGYAIEFGGEAIRSLSMEGRMTLCNMAIEAGARSGMVAVDQTTIDYVKDKPFAPEGEAWDKAVEYWRTLVSDEGAVFDKEYRFNAEDIEPQVTWGTSPEMVLDISSKVPNPAEETDPVKRSGMERALEYMGLEAGTPLNEIPVDIVFIGSCTNSRVEDLREAAAIAKDRKKAANVQRVLIVPGSGLVKEQAEKEGLDKIFIEAGFEWREPGCSMCLAMNADRLTPGQRCASTSNRNFEGRQGNGGRTHLVSPAMAAAAAVTGRFTDIRMMA</sequence>
<gene>
    <name evidence="1" type="primary">leuC</name>
    <name type="ordered locus">NMA1450</name>
</gene>
<dbReference type="EC" id="4.2.1.33" evidence="1"/>
<dbReference type="EMBL" id="AL157959">
    <property type="protein sequence ID" value="CAM08608.1"/>
    <property type="molecule type" value="Genomic_DNA"/>
</dbReference>
<dbReference type="PIR" id="A81836">
    <property type="entry name" value="A81836"/>
</dbReference>
<dbReference type="RefSeq" id="WP_002249844.1">
    <property type="nucleotide sequence ID" value="NC_003116.1"/>
</dbReference>
<dbReference type="SMR" id="Q9JU82"/>
<dbReference type="EnsemblBacteria" id="CAM08608">
    <property type="protein sequence ID" value="CAM08608"/>
    <property type="gene ID" value="NMA1450"/>
</dbReference>
<dbReference type="KEGG" id="nma:NMA1450"/>
<dbReference type="HOGENOM" id="CLU_006714_3_4_4"/>
<dbReference type="UniPathway" id="UPA00048">
    <property type="reaction ID" value="UER00071"/>
</dbReference>
<dbReference type="Proteomes" id="UP000000626">
    <property type="component" value="Chromosome"/>
</dbReference>
<dbReference type="GO" id="GO:0003861">
    <property type="term" value="F:3-isopropylmalate dehydratase activity"/>
    <property type="evidence" value="ECO:0007669"/>
    <property type="project" value="UniProtKB-UniRule"/>
</dbReference>
<dbReference type="GO" id="GO:0051539">
    <property type="term" value="F:4 iron, 4 sulfur cluster binding"/>
    <property type="evidence" value="ECO:0007669"/>
    <property type="project" value="UniProtKB-KW"/>
</dbReference>
<dbReference type="GO" id="GO:0046872">
    <property type="term" value="F:metal ion binding"/>
    <property type="evidence" value="ECO:0007669"/>
    <property type="project" value="UniProtKB-KW"/>
</dbReference>
<dbReference type="GO" id="GO:0009098">
    <property type="term" value="P:L-leucine biosynthetic process"/>
    <property type="evidence" value="ECO:0007669"/>
    <property type="project" value="UniProtKB-UniRule"/>
</dbReference>
<dbReference type="CDD" id="cd01583">
    <property type="entry name" value="IPMI"/>
    <property type="match status" value="1"/>
</dbReference>
<dbReference type="FunFam" id="3.30.499.10:FF:000007">
    <property type="entry name" value="3-isopropylmalate dehydratase large subunit"/>
    <property type="match status" value="1"/>
</dbReference>
<dbReference type="Gene3D" id="3.30.499.10">
    <property type="entry name" value="Aconitase, domain 3"/>
    <property type="match status" value="2"/>
</dbReference>
<dbReference type="HAMAP" id="MF_01026">
    <property type="entry name" value="LeuC_type1"/>
    <property type="match status" value="1"/>
</dbReference>
<dbReference type="InterPro" id="IPR004430">
    <property type="entry name" value="3-IsopropMal_deHydase_lsu"/>
</dbReference>
<dbReference type="InterPro" id="IPR015931">
    <property type="entry name" value="Acnase/IPM_dHydase_lsu_aba_1/3"/>
</dbReference>
<dbReference type="InterPro" id="IPR001030">
    <property type="entry name" value="Acoase/IPM_deHydtase_lsu_aba"/>
</dbReference>
<dbReference type="InterPro" id="IPR018136">
    <property type="entry name" value="Aconitase_4Fe-4S_BS"/>
</dbReference>
<dbReference type="InterPro" id="IPR036008">
    <property type="entry name" value="Aconitase_4Fe-4S_dom"/>
</dbReference>
<dbReference type="InterPro" id="IPR050067">
    <property type="entry name" value="IPM_dehydratase_rel_enz"/>
</dbReference>
<dbReference type="InterPro" id="IPR033941">
    <property type="entry name" value="IPMI_cat"/>
</dbReference>
<dbReference type="NCBIfam" id="TIGR00170">
    <property type="entry name" value="leuC"/>
    <property type="match status" value="1"/>
</dbReference>
<dbReference type="NCBIfam" id="NF004016">
    <property type="entry name" value="PRK05478.1"/>
    <property type="match status" value="1"/>
</dbReference>
<dbReference type="NCBIfam" id="NF009116">
    <property type="entry name" value="PRK12466.1"/>
    <property type="match status" value="1"/>
</dbReference>
<dbReference type="PANTHER" id="PTHR43822:SF9">
    <property type="entry name" value="3-ISOPROPYLMALATE DEHYDRATASE"/>
    <property type="match status" value="1"/>
</dbReference>
<dbReference type="PANTHER" id="PTHR43822">
    <property type="entry name" value="HOMOACONITASE, MITOCHONDRIAL-RELATED"/>
    <property type="match status" value="1"/>
</dbReference>
<dbReference type="Pfam" id="PF00330">
    <property type="entry name" value="Aconitase"/>
    <property type="match status" value="1"/>
</dbReference>
<dbReference type="PRINTS" id="PR00415">
    <property type="entry name" value="ACONITASE"/>
</dbReference>
<dbReference type="SUPFAM" id="SSF53732">
    <property type="entry name" value="Aconitase iron-sulfur domain"/>
    <property type="match status" value="1"/>
</dbReference>
<dbReference type="PROSITE" id="PS00450">
    <property type="entry name" value="ACONITASE_1"/>
    <property type="match status" value="1"/>
</dbReference>
<dbReference type="PROSITE" id="PS01244">
    <property type="entry name" value="ACONITASE_2"/>
    <property type="match status" value="1"/>
</dbReference>
<proteinExistence type="inferred from homology"/>
<name>LEUC_NEIMA</name>
<feature type="chain" id="PRO_0000076768" description="3-isopropylmalate dehydratase large subunit">
    <location>
        <begin position="1"/>
        <end position="469"/>
    </location>
</feature>
<feature type="binding site" evidence="1">
    <location>
        <position position="349"/>
    </location>
    <ligand>
        <name>[4Fe-4S] cluster</name>
        <dbReference type="ChEBI" id="CHEBI:49883"/>
    </ligand>
</feature>
<feature type="binding site" evidence="1">
    <location>
        <position position="410"/>
    </location>
    <ligand>
        <name>[4Fe-4S] cluster</name>
        <dbReference type="ChEBI" id="CHEBI:49883"/>
    </ligand>
</feature>
<feature type="binding site" evidence="1">
    <location>
        <position position="413"/>
    </location>
    <ligand>
        <name>[4Fe-4S] cluster</name>
        <dbReference type="ChEBI" id="CHEBI:49883"/>
    </ligand>
</feature>